<gene>
    <name type="primary">ilvA</name>
    <name type="ordered locus">BSU21770</name>
</gene>
<name>ILVA_BACSU</name>
<organism>
    <name type="scientific">Bacillus subtilis (strain 168)</name>
    <dbReference type="NCBI Taxonomy" id="224308"/>
    <lineage>
        <taxon>Bacteria</taxon>
        <taxon>Bacillati</taxon>
        <taxon>Bacillota</taxon>
        <taxon>Bacilli</taxon>
        <taxon>Bacillales</taxon>
        <taxon>Bacillaceae</taxon>
        <taxon>Bacillus</taxon>
    </lineage>
</organism>
<comment type="function">
    <text evidence="1">Catalyzes the anaerobic formation of alpha-ketobutyrate and ammonia from threonine in a two-step reaction. The first step involved a dehydration of threonine and a production of enamine intermediates (aminocrotonate), which tautomerizes to its imine form (iminobutyrate). Both intermediates are unstable and short-lived. The second step is the nonenzymatic hydrolysis of the enamine/imine intermediates to form 2-ketobutyrate and free ammonia. In the low water environment of the cell, the second step is accelerated by RidA (By similarity).</text>
</comment>
<comment type="catalytic activity">
    <reaction>
        <text>L-threonine = 2-oxobutanoate + NH4(+)</text>
        <dbReference type="Rhea" id="RHEA:22108"/>
        <dbReference type="ChEBI" id="CHEBI:16763"/>
        <dbReference type="ChEBI" id="CHEBI:28938"/>
        <dbReference type="ChEBI" id="CHEBI:57926"/>
        <dbReference type="EC" id="4.3.1.19"/>
    </reaction>
</comment>
<comment type="cofactor">
    <cofactor evidence="1">
        <name>pyridoxal 5'-phosphate</name>
        <dbReference type="ChEBI" id="CHEBI:597326"/>
    </cofactor>
</comment>
<comment type="pathway">
    <text>Amino-acid biosynthesis; L-isoleucine biosynthesis; 2-oxobutanoate from L-threonine: step 1/1.</text>
</comment>
<comment type="subunit">
    <text evidence="1">Homotetramer.</text>
</comment>
<comment type="similarity">
    <text evidence="3">Belongs to the serine/threonine dehydratase family.</text>
</comment>
<protein>
    <recommendedName>
        <fullName>L-threonine dehydratase biosynthetic IlvA</fullName>
        <ecNumber>4.3.1.19</ecNumber>
    </recommendedName>
    <alternativeName>
        <fullName>Threonine deaminase</fullName>
    </alternativeName>
</protein>
<sequence>MKPLLKENSLIQVKHILKAHQNVKDVVIHTPLQRNDRLSERYECNIYLKREDLQVVRSFKLRGAYHKMKQLSSEQTENGVVCASAGNHAQGVAFSCKHLGIHGKIFMPSTTPRQKVSQVELFGKGFIDIILTGDTFDDVYKSAAECCEAESRTFIHPFDDPDVMAGQGTLAVEILNDIDTEPHFLFASVGGGGLLSGVGTYLKNVSPDTKVIAVEPAGAASYFESNKAGHVVTLDKIDKFVDGAAVKKIGEETFRTLETVVDDILLVPEGKVCTSILELYNECAVVAEPAGALSVAALDLYKDQIKGKNVVCVVSGGNNDIGRMQEMKERSLIFEGLQHYFIVNFPQRAGALREFLDEVLGPNDDITRFEYTKKNNKSNGPALVGIELQNKADYGPLIERMNKKPFHYVEVNKDEDLFHLLI</sequence>
<proteinExistence type="inferred from homology"/>
<keyword id="KW-0028">Amino-acid biosynthesis</keyword>
<keyword id="KW-0100">Branched-chain amino acid biosynthesis</keyword>
<keyword id="KW-0412">Isoleucine biosynthesis</keyword>
<keyword id="KW-0456">Lyase</keyword>
<keyword id="KW-0663">Pyridoxal phosphate</keyword>
<keyword id="KW-1185">Reference proteome</keyword>
<evidence type="ECO:0000250" key="1"/>
<evidence type="ECO:0000255" key="2">
    <source>
        <dbReference type="PROSITE-ProRule" id="PRU01008"/>
    </source>
</evidence>
<evidence type="ECO:0000305" key="3"/>
<feature type="chain" id="PRO_0000185570" description="L-threonine dehydratase biosynthetic IlvA">
    <location>
        <begin position="1"/>
        <end position="422"/>
    </location>
</feature>
<feature type="domain" description="ACT-like" evidence="2">
    <location>
        <begin position="339"/>
        <end position="413"/>
    </location>
</feature>
<feature type="binding site" evidence="1">
    <location>
        <position position="87"/>
    </location>
    <ligand>
        <name>pyridoxal 5'-phosphate</name>
        <dbReference type="ChEBI" id="CHEBI:597326"/>
    </ligand>
</feature>
<feature type="binding site" evidence="1">
    <location>
        <begin position="190"/>
        <end position="194"/>
    </location>
    <ligand>
        <name>pyridoxal 5'-phosphate</name>
        <dbReference type="ChEBI" id="CHEBI:597326"/>
    </ligand>
</feature>
<feature type="binding site" evidence="1">
    <location>
        <position position="315"/>
    </location>
    <ligand>
        <name>pyridoxal 5'-phosphate</name>
        <dbReference type="ChEBI" id="CHEBI:597326"/>
    </ligand>
</feature>
<feature type="modified residue" description="N6-(pyridoxal phosphate)lysine" evidence="1">
    <location>
        <position position="60"/>
    </location>
</feature>
<feature type="sequence conflict" description="In Ref. 2; AAA96639/CAB14095." evidence="3" ref="2">
    <original>H</original>
    <variation>D</variation>
    <location>
        <position position="15"/>
    </location>
</feature>
<feature type="sequence conflict" description="In Ref. 2; AAA96639/CAB14095." evidence="3" ref="2">
    <original>V</original>
    <variation>A</variation>
    <location>
        <position position="139"/>
    </location>
</feature>
<accession>P37946</accession>
<reference key="1">
    <citation type="submission" date="1991-02" db="EMBL/GenBank/DDBJ databases">
        <title>Nucleotide sequence analysis of the Bacillus subtilis 168 ilvA gene.</title>
        <authorList>
            <person name="Armpriester J.M. Jr."/>
            <person name="Fink P.S."/>
        </authorList>
    </citation>
    <scope>NUCLEOTIDE SEQUENCE [GENOMIC DNA]</scope>
    <source>
        <strain>168</strain>
    </source>
</reference>
<reference key="2">
    <citation type="journal article" date="1996" name="Microbiology">
        <title>Organization of the Bacillus subtilis 168 chromosome between kdg and the attachment site of the SP beta prophage: use of long accurate PCR and yeast artificial chromosomes for sequencing.</title>
        <authorList>
            <person name="Capuano V."/>
            <person name="Galleron N."/>
            <person name="Pujic P."/>
            <person name="Sorokin A."/>
            <person name="Ehrlich S.D."/>
        </authorList>
    </citation>
    <scope>NUCLEOTIDE SEQUENCE [GENOMIC DNA]</scope>
    <source>
        <strain>168 / Marburg / ATCC 6051 / DSM 10 / JCM 1465 / NBRC 13719 / NCIMB 3610 / NRRL NRS-744 / VKM B-501</strain>
    </source>
</reference>
<reference key="3">
    <citation type="journal article" date="1997" name="Nature">
        <title>The complete genome sequence of the Gram-positive bacterium Bacillus subtilis.</title>
        <authorList>
            <person name="Kunst F."/>
            <person name="Ogasawara N."/>
            <person name="Moszer I."/>
            <person name="Albertini A.M."/>
            <person name="Alloni G."/>
            <person name="Azevedo V."/>
            <person name="Bertero M.G."/>
            <person name="Bessieres P."/>
            <person name="Bolotin A."/>
            <person name="Borchert S."/>
            <person name="Borriss R."/>
            <person name="Boursier L."/>
            <person name="Brans A."/>
            <person name="Braun M."/>
            <person name="Brignell S.C."/>
            <person name="Bron S."/>
            <person name="Brouillet S."/>
            <person name="Bruschi C.V."/>
            <person name="Caldwell B."/>
            <person name="Capuano V."/>
            <person name="Carter N.M."/>
            <person name="Choi S.-K."/>
            <person name="Codani J.-J."/>
            <person name="Connerton I.F."/>
            <person name="Cummings N.J."/>
            <person name="Daniel R.A."/>
            <person name="Denizot F."/>
            <person name="Devine K.M."/>
            <person name="Duesterhoeft A."/>
            <person name="Ehrlich S.D."/>
            <person name="Emmerson P.T."/>
            <person name="Entian K.-D."/>
            <person name="Errington J."/>
            <person name="Fabret C."/>
            <person name="Ferrari E."/>
            <person name="Foulger D."/>
            <person name="Fritz C."/>
            <person name="Fujita M."/>
            <person name="Fujita Y."/>
            <person name="Fuma S."/>
            <person name="Galizzi A."/>
            <person name="Galleron N."/>
            <person name="Ghim S.-Y."/>
            <person name="Glaser P."/>
            <person name="Goffeau A."/>
            <person name="Golightly E.J."/>
            <person name="Grandi G."/>
            <person name="Guiseppi G."/>
            <person name="Guy B.J."/>
            <person name="Haga K."/>
            <person name="Haiech J."/>
            <person name="Harwood C.R."/>
            <person name="Henaut A."/>
            <person name="Hilbert H."/>
            <person name="Holsappel S."/>
            <person name="Hosono S."/>
            <person name="Hullo M.-F."/>
            <person name="Itaya M."/>
            <person name="Jones L.-M."/>
            <person name="Joris B."/>
            <person name="Karamata D."/>
            <person name="Kasahara Y."/>
            <person name="Klaerr-Blanchard M."/>
            <person name="Klein C."/>
            <person name="Kobayashi Y."/>
            <person name="Koetter P."/>
            <person name="Koningstein G."/>
            <person name="Krogh S."/>
            <person name="Kumano M."/>
            <person name="Kurita K."/>
            <person name="Lapidus A."/>
            <person name="Lardinois S."/>
            <person name="Lauber J."/>
            <person name="Lazarevic V."/>
            <person name="Lee S.-M."/>
            <person name="Levine A."/>
            <person name="Liu H."/>
            <person name="Masuda S."/>
            <person name="Mauel C."/>
            <person name="Medigue C."/>
            <person name="Medina N."/>
            <person name="Mellado R.P."/>
            <person name="Mizuno M."/>
            <person name="Moestl D."/>
            <person name="Nakai S."/>
            <person name="Noback M."/>
            <person name="Noone D."/>
            <person name="O'Reilly M."/>
            <person name="Ogawa K."/>
            <person name="Ogiwara A."/>
            <person name="Oudega B."/>
            <person name="Park S.-H."/>
            <person name="Parro V."/>
            <person name="Pohl T.M."/>
            <person name="Portetelle D."/>
            <person name="Porwollik S."/>
            <person name="Prescott A.M."/>
            <person name="Presecan E."/>
            <person name="Pujic P."/>
            <person name="Purnelle B."/>
            <person name="Rapoport G."/>
            <person name="Rey M."/>
            <person name="Reynolds S."/>
            <person name="Rieger M."/>
            <person name="Rivolta C."/>
            <person name="Rocha E."/>
            <person name="Roche B."/>
            <person name="Rose M."/>
            <person name="Sadaie Y."/>
            <person name="Sato T."/>
            <person name="Scanlan E."/>
            <person name="Schleich S."/>
            <person name="Schroeter R."/>
            <person name="Scoffone F."/>
            <person name="Sekiguchi J."/>
            <person name="Sekowska A."/>
            <person name="Seror S.J."/>
            <person name="Serror P."/>
            <person name="Shin B.-S."/>
            <person name="Soldo B."/>
            <person name="Sorokin A."/>
            <person name="Tacconi E."/>
            <person name="Takagi T."/>
            <person name="Takahashi H."/>
            <person name="Takemaru K."/>
            <person name="Takeuchi M."/>
            <person name="Tamakoshi A."/>
            <person name="Tanaka T."/>
            <person name="Terpstra P."/>
            <person name="Tognoni A."/>
            <person name="Tosato V."/>
            <person name="Uchiyama S."/>
            <person name="Vandenbol M."/>
            <person name="Vannier F."/>
            <person name="Vassarotti A."/>
            <person name="Viari A."/>
            <person name="Wambutt R."/>
            <person name="Wedler E."/>
            <person name="Wedler H."/>
            <person name="Weitzenegger T."/>
            <person name="Winters P."/>
            <person name="Wipat A."/>
            <person name="Yamamoto H."/>
            <person name="Yamane K."/>
            <person name="Yasumoto K."/>
            <person name="Yata K."/>
            <person name="Yoshida K."/>
            <person name="Yoshikawa H.-F."/>
            <person name="Zumstein E."/>
            <person name="Yoshikawa H."/>
            <person name="Danchin A."/>
        </authorList>
    </citation>
    <scope>NUCLEOTIDE SEQUENCE [LARGE SCALE GENOMIC DNA]</scope>
    <source>
        <strain>168</strain>
    </source>
</reference>
<dbReference type="EC" id="4.3.1.19"/>
<dbReference type="EMBL" id="M58606">
    <property type="protein sequence ID" value="AAA22549.1"/>
    <property type="molecule type" value="Genomic_DNA"/>
</dbReference>
<dbReference type="EMBL" id="L77246">
    <property type="protein sequence ID" value="AAA96639.1"/>
    <property type="molecule type" value="Genomic_DNA"/>
</dbReference>
<dbReference type="EMBL" id="AL009126">
    <property type="protein sequence ID" value="CAB14095.1"/>
    <property type="molecule type" value="Genomic_DNA"/>
</dbReference>
<dbReference type="PIR" id="A69644">
    <property type="entry name" value="A69644"/>
</dbReference>
<dbReference type="RefSeq" id="NP_390060.1">
    <property type="nucleotide sequence ID" value="NC_000964.3"/>
</dbReference>
<dbReference type="SMR" id="P37946"/>
<dbReference type="FunCoup" id="P37946">
    <property type="interactions" value="656"/>
</dbReference>
<dbReference type="IntAct" id="P37946">
    <property type="interactions" value="1"/>
</dbReference>
<dbReference type="MINT" id="P37946"/>
<dbReference type="STRING" id="224308.BSU21770"/>
<dbReference type="PaxDb" id="224308-BSU21770"/>
<dbReference type="EnsemblBacteria" id="CAB14095">
    <property type="protein sequence ID" value="CAB14095"/>
    <property type="gene ID" value="BSU_21770"/>
</dbReference>
<dbReference type="GeneID" id="939093"/>
<dbReference type="KEGG" id="bsu:BSU21770"/>
<dbReference type="PATRIC" id="fig|224308.43.peg.2270"/>
<dbReference type="eggNOG" id="COG1171">
    <property type="taxonomic scope" value="Bacteria"/>
</dbReference>
<dbReference type="InParanoid" id="P37946"/>
<dbReference type="OrthoDB" id="9811476at2"/>
<dbReference type="BioCyc" id="BSUB:BSU21770-MONOMER"/>
<dbReference type="SABIO-RK" id="P37946"/>
<dbReference type="UniPathway" id="UPA00047">
    <property type="reaction ID" value="UER00054"/>
</dbReference>
<dbReference type="Proteomes" id="UP000001570">
    <property type="component" value="Chromosome"/>
</dbReference>
<dbReference type="GO" id="GO:0030170">
    <property type="term" value="F:pyridoxal phosphate binding"/>
    <property type="evidence" value="ECO:0007669"/>
    <property type="project" value="InterPro"/>
</dbReference>
<dbReference type="GO" id="GO:0004794">
    <property type="term" value="F:threonine deaminase activity"/>
    <property type="evidence" value="ECO:0000318"/>
    <property type="project" value="GO_Central"/>
</dbReference>
<dbReference type="GO" id="GO:0009097">
    <property type="term" value="P:isoleucine biosynthetic process"/>
    <property type="evidence" value="ECO:0000318"/>
    <property type="project" value="GO_Central"/>
</dbReference>
<dbReference type="GO" id="GO:0006566">
    <property type="term" value="P:threonine metabolic process"/>
    <property type="evidence" value="ECO:0000250"/>
    <property type="project" value="UniProtKB"/>
</dbReference>
<dbReference type="CDD" id="cd04907">
    <property type="entry name" value="ACT_ThrD-I_2"/>
    <property type="match status" value="1"/>
</dbReference>
<dbReference type="CDD" id="cd01562">
    <property type="entry name" value="Thr-dehyd"/>
    <property type="match status" value="1"/>
</dbReference>
<dbReference type="FunFam" id="3.40.1020.10:FF:000002">
    <property type="entry name" value="L-threonine dehydratase"/>
    <property type="match status" value="1"/>
</dbReference>
<dbReference type="FunFam" id="3.40.50.1100:FF:000007">
    <property type="entry name" value="L-threonine dehydratase catabolic TdcB"/>
    <property type="match status" value="1"/>
</dbReference>
<dbReference type="FunFam" id="3.40.50.1100:FF:000005">
    <property type="entry name" value="Threonine dehydratase catabolic"/>
    <property type="match status" value="1"/>
</dbReference>
<dbReference type="Gene3D" id="3.40.50.1100">
    <property type="match status" value="2"/>
</dbReference>
<dbReference type="InterPro" id="IPR011820">
    <property type="entry name" value="IlvA"/>
</dbReference>
<dbReference type="InterPro" id="IPR050147">
    <property type="entry name" value="Ser/Thr_Dehydratase"/>
</dbReference>
<dbReference type="InterPro" id="IPR000634">
    <property type="entry name" value="Ser/Thr_deHydtase_PyrdxlP-BS"/>
</dbReference>
<dbReference type="InterPro" id="IPR001721">
    <property type="entry name" value="TD_ACT-like"/>
</dbReference>
<dbReference type="InterPro" id="IPR001926">
    <property type="entry name" value="TrpB-like_PALP"/>
</dbReference>
<dbReference type="InterPro" id="IPR036052">
    <property type="entry name" value="TrpB-like_PALP_sf"/>
</dbReference>
<dbReference type="NCBIfam" id="NF006390">
    <property type="entry name" value="PRK08639.1"/>
    <property type="match status" value="1"/>
</dbReference>
<dbReference type="NCBIfam" id="TIGR02079">
    <property type="entry name" value="THD1"/>
    <property type="match status" value="1"/>
</dbReference>
<dbReference type="PANTHER" id="PTHR48078:SF11">
    <property type="entry name" value="THREONINE DEHYDRATASE, MITOCHONDRIAL"/>
    <property type="match status" value="1"/>
</dbReference>
<dbReference type="PANTHER" id="PTHR48078">
    <property type="entry name" value="THREONINE DEHYDRATASE, MITOCHONDRIAL-RELATED"/>
    <property type="match status" value="1"/>
</dbReference>
<dbReference type="Pfam" id="PF00291">
    <property type="entry name" value="PALP"/>
    <property type="match status" value="1"/>
</dbReference>
<dbReference type="Pfam" id="PF00585">
    <property type="entry name" value="Thr_dehydrat_C"/>
    <property type="match status" value="1"/>
</dbReference>
<dbReference type="SUPFAM" id="SSF53686">
    <property type="entry name" value="Tryptophan synthase beta subunit-like PLP-dependent enzymes"/>
    <property type="match status" value="1"/>
</dbReference>
<dbReference type="PROSITE" id="PS51672">
    <property type="entry name" value="ACT_LIKE"/>
    <property type="match status" value="1"/>
</dbReference>
<dbReference type="PROSITE" id="PS00165">
    <property type="entry name" value="DEHYDRATASE_SER_THR"/>
    <property type="match status" value="1"/>
</dbReference>